<accession>Q6F9J1</accession>
<evidence type="ECO:0000255" key="1">
    <source>
        <dbReference type="HAMAP-Rule" id="MF_00654"/>
    </source>
</evidence>
<feature type="chain" id="PRO_0000219975" description="Pyrroloquinoline-quinone synthase">
    <location>
        <begin position="1"/>
        <end position="255"/>
    </location>
</feature>
<organism>
    <name type="scientific">Acinetobacter baylyi (strain ATCC 33305 / BD413 / ADP1)</name>
    <dbReference type="NCBI Taxonomy" id="62977"/>
    <lineage>
        <taxon>Bacteria</taxon>
        <taxon>Pseudomonadati</taxon>
        <taxon>Pseudomonadota</taxon>
        <taxon>Gammaproteobacteria</taxon>
        <taxon>Moraxellales</taxon>
        <taxon>Moraxellaceae</taxon>
        <taxon>Acinetobacter</taxon>
    </lineage>
</organism>
<reference key="1">
    <citation type="journal article" date="2004" name="Nucleic Acids Res.">
        <title>Unique features revealed by the genome sequence of Acinetobacter sp. ADP1, a versatile and naturally transformation competent bacterium.</title>
        <authorList>
            <person name="Barbe V."/>
            <person name="Vallenet D."/>
            <person name="Fonknechten N."/>
            <person name="Kreimeyer A."/>
            <person name="Oztas S."/>
            <person name="Labarre L."/>
            <person name="Cruveiller S."/>
            <person name="Robert C."/>
            <person name="Duprat S."/>
            <person name="Wincker P."/>
            <person name="Ornston L.N."/>
            <person name="Weissenbach J."/>
            <person name="Marliere P."/>
            <person name="Cohen G.N."/>
            <person name="Medigue C."/>
        </authorList>
    </citation>
    <scope>NUCLEOTIDE SEQUENCE [LARGE SCALE GENOMIC DNA]</scope>
    <source>
        <strain>ATCC 33305 / BD413 / ADP1</strain>
    </source>
</reference>
<dbReference type="EC" id="1.3.3.11" evidence="1"/>
<dbReference type="EMBL" id="CR543861">
    <property type="protein sequence ID" value="CAG69273.1"/>
    <property type="molecule type" value="Genomic_DNA"/>
</dbReference>
<dbReference type="RefSeq" id="WP_011182533.1">
    <property type="nucleotide sequence ID" value="NC_005966.1"/>
</dbReference>
<dbReference type="SMR" id="Q6F9J1"/>
<dbReference type="STRING" id="202950.GCA_001485005_01509"/>
<dbReference type="GeneID" id="45234792"/>
<dbReference type="KEGG" id="aci:ACIAD2505"/>
<dbReference type="eggNOG" id="COG5424">
    <property type="taxonomic scope" value="Bacteria"/>
</dbReference>
<dbReference type="HOGENOM" id="CLU_080136_0_0_6"/>
<dbReference type="UniPathway" id="UPA00539"/>
<dbReference type="Proteomes" id="UP000000430">
    <property type="component" value="Chromosome"/>
</dbReference>
<dbReference type="GO" id="GO:0033732">
    <property type="term" value="F:pyrroloquinoline-quinone synthase activity"/>
    <property type="evidence" value="ECO:0007669"/>
    <property type="project" value="UniProtKB-EC"/>
</dbReference>
<dbReference type="GO" id="GO:0018189">
    <property type="term" value="P:pyrroloquinoline quinone biosynthetic process"/>
    <property type="evidence" value="ECO:0007669"/>
    <property type="project" value="UniProtKB-UniRule"/>
</dbReference>
<dbReference type="GO" id="GO:0006790">
    <property type="term" value="P:sulfur compound metabolic process"/>
    <property type="evidence" value="ECO:0007669"/>
    <property type="project" value="UniProtKB-ARBA"/>
</dbReference>
<dbReference type="CDD" id="cd19370">
    <property type="entry name" value="TenA_PqqC"/>
    <property type="match status" value="1"/>
</dbReference>
<dbReference type="Gene3D" id="1.20.910.10">
    <property type="entry name" value="Heme oxygenase-like"/>
    <property type="match status" value="1"/>
</dbReference>
<dbReference type="HAMAP" id="MF_00654">
    <property type="entry name" value="PQQ_syn_PqqC"/>
    <property type="match status" value="1"/>
</dbReference>
<dbReference type="InterPro" id="IPR016084">
    <property type="entry name" value="Haem_Oase-like_multi-hlx"/>
</dbReference>
<dbReference type="InterPro" id="IPR011845">
    <property type="entry name" value="PqqC"/>
</dbReference>
<dbReference type="InterPro" id="IPR039068">
    <property type="entry name" value="PqqC-like"/>
</dbReference>
<dbReference type="InterPro" id="IPR004305">
    <property type="entry name" value="Thiaminase-2/PQQC"/>
</dbReference>
<dbReference type="NCBIfam" id="TIGR02111">
    <property type="entry name" value="PQQ_syn_pqqC"/>
    <property type="match status" value="1"/>
</dbReference>
<dbReference type="PANTHER" id="PTHR40279:SF3">
    <property type="entry name" value="4-AMINOBENZOATE SYNTHASE"/>
    <property type="match status" value="1"/>
</dbReference>
<dbReference type="PANTHER" id="PTHR40279">
    <property type="entry name" value="PQQC-LIKE PROTEIN"/>
    <property type="match status" value="1"/>
</dbReference>
<dbReference type="Pfam" id="PF03070">
    <property type="entry name" value="TENA_THI-4"/>
    <property type="match status" value="1"/>
</dbReference>
<dbReference type="SUPFAM" id="SSF48613">
    <property type="entry name" value="Heme oxygenase-like"/>
    <property type="match status" value="1"/>
</dbReference>
<name>PQQC_ACIAD</name>
<gene>
    <name evidence="1" type="primary">pqqC</name>
    <name type="ordered locus">ACIAD2505</name>
</gene>
<keyword id="KW-0560">Oxidoreductase</keyword>
<keyword id="KW-0884">PQQ biosynthesis</keyword>
<proteinExistence type="inferred from homology"/>
<protein>
    <recommendedName>
        <fullName evidence="1">Pyrroloquinoline-quinone synthase</fullName>
        <ecNumber evidence="1">1.3.3.11</ecNumber>
    </recommendedName>
    <alternativeName>
        <fullName evidence="1">Coenzyme PQQ synthesis protein C</fullName>
    </alternativeName>
    <alternativeName>
        <fullName evidence="1">Pyrroloquinoline quinone biosynthesis protein C</fullName>
    </alternativeName>
</protein>
<sequence>MRFNMTTTLFSPAEFEQALRDKGRYYHIHHPYHIMMNDGHATKQQIQGWVANRFYYQVNIPLKDAAIMANCPDPATRRKWVQRILDHDGQHDDHGGIEAWLRLGEAVGLDRETILSQKMVLPSVRFAVDAYVNFARRACWQEAACSSLTELFAPAIHQSRLDTWPTHYPWIDAEGYAYFRGRLSQANRDVEHGLELALEYCNTVDRQQRMLNILQFKLDILWTILDGMSMAYVLERAPYHTVTQEAVWHQKGLLG</sequence>
<comment type="function">
    <text evidence="1">Ring cyclization and eight-electron oxidation of 3a-(2-amino-2-carboxyethyl)-4,5-dioxo-4,5,6,7,8,9-hexahydroquinoline-7,9-dicarboxylic-acid to PQQ.</text>
</comment>
<comment type="catalytic activity">
    <reaction evidence="1">
        <text>6-(2-amino-2-carboxyethyl)-7,8-dioxo-1,2,3,4,7,8-hexahydroquinoline-2,4-dicarboxylate + 3 O2 = pyrroloquinoline quinone + 2 H2O2 + 2 H2O + H(+)</text>
        <dbReference type="Rhea" id="RHEA:10692"/>
        <dbReference type="ChEBI" id="CHEBI:15377"/>
        <dbReference type="ChEBI" id="CHEBI:15378"/>
        <dbReference type="ChEBI" id="CHEBI:15379"/>
        <dbReference type="ChEBI" id="CHEBI:16240"/>
        <dbReference type="ChEBI" id="CHEBI:58442"/>
        <dbReference type="ChEBI" id="CHEBI:58778"/>
        <dbReference type="EC" id="1.3.3.11"/>
    </reaction>
</comment>
<comment type="pathway">
    <text evidence="1">Cofactor biosynthesis; pyrroloquinoline quinone biosynthesis.</text>
</comment>
<comment type="similarity">
    <text evidence="1">Belongs to the PqqC family.</text>
</comment>